<keyword id="KW-0694">RNA-binding</keyword>
<keyword id="KW-0804">Transcription</keyword>
<keyword id="KW-0889">Transcription antitermination</keyword>
<keyword id="KW-0805">Transcription regulation</keyword>
<reference key="1">
    <citation type="journal article" date="2004" name="Proc. Natl. Acad. Sci. U.S.A.">
        <title>Complete genomes of two clinical Staphylococcus aureus strains: evidence for the rapid evolution of virulence and drug resistance.</title>
        <authorList>
            <person name="Holden M.T.G."/>
            <person name="Feil E.J."/>
            <person name="Lindsay J.A."/>
            <person name="Peacock S.J."/>
            <person name="Day N.P.J."/>
            <person name="Enright M.C."/>
            <person name="Foster T.J."/>
            <person name="Moore C.E."/>
            <person name="Hurst L."/>
            <person name="Atkin R."/>
            <person name="Barron A."/>
            <person name="Bason N."/>
            <person name="Bentley S.D."/>
            <person name="Chillingworth C."/>
            <person name="Chillingworth T."/>
            <person name="Churcher C."/>
            <person name="Clark L."/>
            <person name="Corton C."/>
            <person name="Cronin A."/>
            <person name="Doggett J."/>
            <person name="Dowd L."/>
            <person name="Feltwell T."/>
            <person name="Hance Z."/>
            <person name="Harris B."/>
            <person name="Hauser H."/>
            <person name="Holroyd S."/>
            <person name="Jagels K."/>
            <person name="James K.D."/>
            <person name="Lennard N."/>
            <person name="Line A."/>
            <person name="Mayes R."/>
            <person name="Moule S."/>
            <person name="Mungall K."/>
            <person name="Ormond D."/>
            <person name="Quail M.A."/>
            <person name="Rabbinowitsch E."/>
            <person name="Rutherford K.M."/>
            <person name="Sanders M."/>
            <person name="Sharp S."/>
            <person name="Simmonds M."/>
            <person name="Stevens K."/>
            <person name="Whitehead S."/>
            <person name="Barrell B.G."/>
            <person name="Spratt B.G."/>
            <person name="Parkhill J."/>
        </authorList>
    </citation>
    <scope>NUCLEOTIDE SEQUENCE [LARGE SCALE GENOMIC DNA]</scope>
    <source>
        <strain>MRSA252</strain>
    </source>
</reference>
<feature type="chain" id="PRO_0000176580" description="Transcription antitermination protein NusB">
    <location>
        <begin position="1"/>
        <end position="129"/>
    </location>
</feature>
<evidence type="ECO:0000255" key="1">
    <source>
        <dbReference type="HAMAP-Rule" id="MF_00073"/>
    </source>
</evidence>
<protein>
    <recommendedName>
        <fullName evidence="1">Transcription antitermination protein NusB</fullName>
    </recommendedName>
    <alternativeName>
        <fullName evidence="1">Antitermination factor NusB</fullName>
    </alternativeName>
</protein>
<organism>
    <name type="scientific">Staphylococcus aureus (strain MRSA252)</name>
    <dbReference type="NCBI Taxonomy" id="282458"/>
    <lineage>
        <taxon>Bacteria</taxon>
        <taxon>Bacillati</taxon>
        <taxon>Bacillota</taxon>
        <taxon>Bacilli</taxon>
        <taxon>Bacillales</taxon>
        <taxon>Staphylococcaceae</taxon>
        <taxon>Staphylococcus</taxon>
    </lineage>
</organism>
<gene>
    <name evidence="1" type="primary">nusB</name>
    <name type="ordered locus">SAR1602</name>
</gene>
<proteinExistence type="inferred from homology"/>
<dbReference type="EMBL" id="BX571856">
    <property type="protein sequence ID" value="CAG40597.1"/>
    <property type="molecule type" value="Genomic_DNA"/>
</dbReference>
<dbReference type="RefSeq" id="WP_000087384.1">
    <property type="nucleotide sequence ID" value="NC_002952.2"/>
</dbReference>
<dbReference type="SMR" id="Q6GGH4"/>
<dbReference type="KEGG" id="sar:SAR1602"/>
<dbReference type="HOGENOM" id="CLU_087843_3_3_9"/>
<dbReference type="Proteomes" id="UP000000596">
    <property type="component" value="Chromosome"/>
</dbReference>
<dbReference type="GO" id="GO:0005829">
    <property type="term" value="C:cytosol"/>
    <property type="evidence" value="ECO:0007669"/>
    <property type="project" value="TreeGrafter"/>
</dbReference>
<dbReference type="GO" id="GO:0003723">
    <property type="term" value="F:RNA binding"/>
    <property type="evidence" value="ECO:0007669"/>
    <property type="project" value="UniProtKB-UniRule"/>
</dbReference>
<dbReference type="GO" id="GO:0006353">
    <property type="term" value="P:DNA-templated transcription termination"/>
    <property type="evidence" value="ECO:0007669"/>
    <property type="project" value="UniProtKB-UniRule"/>
</dbReference>
<dbReference type="GO" id="GO:0031564">
    <property type="term" value="P:transcription antitermination"/>
    <property type="evidence" value="ECO:0007669"/>
    <property type="project" value="UniProtKB-KW"/>
</dbReference>
<dbReference type="Gene3D" id="1.10.940.10">
    <property type="entry name" value="NusB-like"/>
    <property type="match status" value="1"/>
</dbReference>
<dbReference type="HAMAP" id="MF_00073">
    <property type="entry name" value="NusB"/>
    <property type="match status" value="1"/>
</dbReference>
<dbReference type="InterPro" id="IPR035926">
    <property type="entry name" value="NusB-like_sf"/>
</dbReference>
<dbReference type="InterPro" id="IPR011605">
    <property type="entry name" value="NusB_fam"/>
</dbReference>
<dbReference type="InterPro" id="IPR006027">
    <property type="entry name" value="NusB_RsmB_TIM44"/>
</dbReference>
<dbReference type="NCBIfam" id="TIGR01951">
    <property type="entry name" value="nusB"/>
    <property type="match status" value="1"/>
</dbReference>
<dbReference type="PANTHER" id="PTHR11078:SF3">
    <property type="entry name" value="ANTITERMINATION NUSB DOMAIN-CONTAINING PROTEIN"/>
    <property type="match status" value="1"/>
</dbReference>
<dbReference type="PANTHER" id="PTHR11078">
    <property type="entry name" value="N UTILIZATION SUBSTANCE PROTEIN B-RELATED"/>
    <property type="match status" value="1"/>
</dbReference>
<dbReference type="Pfam" id="PF01029">
    <property type="entry name" value="NusB"/>
    <property type="match status" value="1"/>
</dbReference>
<dbReference type="SUPFAM" id="SSF48013">
    <property type="entry name" value="NusB-like"/>
    <property type="match status" value="1"/>
</dbReference>
<accession>Q6GGH4</accession>
<comment type="function">
    <text evidence="1">Involved in transcription antitermination. Required for transcription of ribosomal RNA (rRNA) genes. Binds specifically to the boxA antiterminator sequence of the ribosomal RNA (rrn) operons.</text>
</comment>
<comment type="similarity">
    <text evidence="1">Belongs to the NusB family.</text>
</comment>
<sequence>MSRKESRVQAFQTLFQLEMKDSDLTINEAISFIKDDNPDLDFEFIHWLVSGVKDHEPVLDETISPNLKDWTIARLLKTDRIILRMATYEILHSDTPAKVVMNEAVELTKQFSDDDHYKFINGVLSNIKK</sequence>
<name>NUSB_STAAR</name>